<reference key="1">
    <citation type="journal article" date="1998" name="J. Mol. Biol.">
        <title>Genome structure of mycobacteriophage D29: implications for phage evolution.</title>
        <authorList>
            <person name="Ford M.E."/>
            <person name="Sarkis G.J."/>
            <person name="Belanger A.E."/>
            <person name="Hendrix R.W."/>
            <person name="Hatfull G.F."/>
        </authorList>
    </citation>
    <scope>NUCLEOTIDE SEQUENCE [LARGE SCALE GENOMIC DNA]</scope>
</reference>
<name>VG27_BPMD2</name>
<accession>O64221</accession>
<organismHost>
    <name type="scientific">Mycobacterium</name>
    <dbReference type="NCBI Taxonomy" id="1763"/>
</organismHost>
<proteinExistence type="predicted"/>
<gene>
    <name type="primary">27</name>
</gene>
<dbReference type="EMBL" id="AF022214">
    <property type="protein sequence ID" value="AAC18468.1"/>
    <property type="molecule type" value="Genomic_DNA"/>
</dbReference>
<dbReference type="PIR" id="A72803">
    <property type="entry name" value="A72803"/>
</dbReference>
<dbReference type="RefSeq" id="NP_046843.1">
    <property type="nucleotide sequence ID" value="NC_001900.1"/>
</dbReference>
<dbReference type="SMR" id="O64221"/>
<dbReference type="GeneID" id="1261590"/>
<dbReference type="KEGG" id="vg:1261590"/>
<dbReference type="OrthoDB" id="2201at10239"/>
<dbReference type="Proteomes" id="UP000002131">
    <property type="component" value="Segment"/>
</dbReference>
<sequence length="336" mass="38747">MITDTIVELEGVNGERFNLTTGDQGVFLATDVEGCFYDPPVKVVYEEPGNYPGARYLGHRVLKRDIVFGVQILNDAKQGPRSWLSRDSVWRKAWAFNRVCKLYVTTPDSGTRYLYLALFESPKVEMKTDPRGNTINLTVMSCISYDPFWYEDDRVFSVKTKTDTRFDPNFWTPPWPWEELPKETLRIKVGREQGGLNPTDQYIAPKWTVPGSTEKIPDFPWPFPPGVEIPWETAPFTQFVIPDYSFEDEEFANRRLKTPGLIYGENCIIDTDRREEQISSESGSPVWARMNGVRFRNMIPPYTEEREFVIDASGCAPGQVVTLRLPRPWSRCWGLE</sequence>
<keyword id="KW-1185">Reference proteome</keyword>
<protein>
    <recommendedName>
        <fullName>Minor tail protein Gp27</fullName>
    </recommendedName>
</protein>
<organism>
    <name type="scientific">Mycobacterium phage D29</name>
    <name type="common">Mycobacteriophage D29</name>
    <dbReference type="NCBI Taxonomy" id="28369"/>
    <lineage>
        <taxon>Viruses</taxon>
        <taxon>Duplodnaviria</taxon>
        <taxon>Heunggongvirae</taxon>
        <taxon>Uroviricota</taxon>
        <taxon>Caudoviricetes</taxon>
        <taxon>Fromanvirus</taxon>
    </lineage>
</organism>
<feature type="chain" id="PRO_0000164742" description="Minor tail protein Gp27">
    <location>
        <begin position="1"/>
        <end position="336"/>
    </location>
</feature>